<feature type="chain" id="PRO_0000346511" description="PKHD-type hydroxylase PputW619_4316">
    <location>
        <begin position="1"/>
        <end position="226"/>
    </location>
</feature>
<feature type="domain" description="Fe2OG dioxygenase" evidence="1">
    <location>
        <begin position="78"/>
        <end position="178"/>
    </location>
</feature>
<feature type="binding site" evidence="1">
    <location>
        <position position="96"/>
    </location>
    <ligand>
        <name>Fe cation</name>
        <dbReference type="ChEBI" id="CHEBI:24875"/>
    </ligand>
</feature>
<feature type="binding site" evidence="1">
    <location>
        <position position="98"/>
    </location>
    <ligand>
        <name>Fe cation</name>
        <dbReference type="ChEBI" id="CHEBI:24875"/>
    </ligand>
</feature>
<feature type="binding site" evidence="1">
    <location>
        <position position="159"/>
    </location>
    <ligand>
        <name>Fe cation</name>
        <dbReference type="ChEBI" id="CHEBI:24875"/>
    </ligand>
</feature>
<feature type="binding site" evidence="1">
    <location>
        <position position="169"/>
    </location>
    <ligand>
        <name>2-oxoglutarate</name>
        <dbReference type="ChEBI" id="CHEBI:16810"/>
    </ligand>
</feature>
<keyword id="KW-0223">Dioxygenase</keyword>
<keyword id="KW-0408">Iron</keyword>
<keyword id="KW-0479">Metal-binding</keyword>
<keyword id="KW-0560">Oxidoreductase</keyword>
<keyword id="KW-0847">Vitamin C</keyword>
<accession>B1JBH6</accession>
<dbReference type="EC" id="1.14.11.-" evidence="1"/>
<dbReference type="EMBL" id="CP000949">
    <property type="protein sequence ID" value="ACA74796.1"/>
    <property type="molecule type" value="Genomic_DNA"/>
</dbReference>
<dbReference type="SMR" id="B1JBH6"/>
<dbReference type="STRING" id="390235.PputW619_4316"/>
<dbReference type="KEGG" id="ppw:PputW619_4316"/>
<dbReference type="eggNOG" id="COG3128">
    <property type="taxonomic scope" value="Bacteria"/>
</dbReference>
<dbReference type="HOGENOM" id="CLU_106663_0_0_6"/>
<dbReference type="OrthoDB" id="9812472at2"/>
<dbReference type="GO" id="GO:0016706">
    <property type="term" value="F:2-oxoglutarate-dependent dioxygenase activity"/>
    <property type="evidence" value="ECO:0007669"/>
    <property type="project" value="UniProtKB-UniRule"/>
</dbReference>
<dbReference type="GO" id="GO:0005506">
    <property type="term" value="F:iron ion binding"/>
    <property type="evidence" value="ECO:0007669"/>
    <property type="project" value="UniProtKB-UniRule"/>
</dbReference>
<dbReference type="GO" id="GO:0031418">
    <property type="term" value="F:L-ascorbic acid binding"/>
    <property type="evidence" value="ECO:0007669"/>
    <property type="project" value="UniProtKB-KW"/>
</dbReference>
<dbReference type="GO" id="GO:0006974">
    <property type="term" value="P:DNA damage response"/>
    <property type="evidence" value="ECO:0007669"/>
    <property type="project" value="TreeGrafter"/>
</dbReference>
<dbReference type="GO" id="GO:0006879">
    <property type="term" value="P:intracellular iron ion homeostasis"/>
    <property type="evidence" value="ECO:0007669"/>
    <property type="project" value="TreeGrafter"/>
</dbReference>
<dbReference type="Gene3D" id="2.60.120.620">
    <property type="entry name" value="q2cbj1_9rhob like domain"/>
    <property type="match status" value="1"/>
</dbReference>
<dbReference type="Gene3D" id="4.10.860.20">
    <property type="entry name" value="Rabenosyn, Rab binding domain"/>
    <property type="match status" value="1"/>
</dbReference>
<dbReference type="HAMAP" id="MF_00657">
    <property type="entry name" value="Hydroxyl_YbiX"/>
    <property type="match status" value="1"/>
</dbReference>
<dbReference type="InterPro" id="IPR005123">
    <property type="entry name" value="Oxoglu/Fe-dep_dioxygenase_dom"/>
</dbReference>
<dbReference type="InterPro" id="IPR041097">
    <property type="entry name" value="PKHD_C"/>
</dbReference>
<dbReference type="InterPro" id="IPR023550">
    <property type="entry name" value="PKHD_hydroxylase"/>
</dbReference>
<dbReference type="InterPro" id="IPR006620">
    <property type="entry name" value="Pro_4_hyd_alph"/>
</dbReference>
<dbReference type="InterPro" id="IPR044862">
    <property type="entry name" value="Pro_4_hyd_alph_FE2OG_OXY"/>
</dbReference>
<dbReference type="NCBIfam" id="NF003974">
    <property type="entry name" value="PRK05467.1-3"/>
    <property type="match status" value="1"/>
</dbReference>
<dbReference type="NCBIfam" id="NF003975">
    <property type="entry name" value="PRK05467.1-4"/>
    <property type="match status" value="1"/>
</dbReference>
<dbReference type="PANTHER" id="PTHR41536">
    <property type="entry name" value="PKHD-TYPE HYDROXYLASE YBIX"/>
    <property type="match status" value="1"/>
</dbReference>
<dbReference type="PANTHER" id="PTHR41536:SF1">
    <property type="entry name" value="PKHD-TYPE HYDROXYLASE YBIX"/>
    <property type="match status" value="1"/>
</dbReference>
<dbReference type="Pfam" id="PF13640">
    <property type="entry name" value="2OG-FeII_Oxy_3"/>
    <property type="match status" value="1"/>
</dbReference>
<dbReference type="Pfam" id="PF18331">
    <property type="entry name" value="PKHD_C"/>
    <property type="match status" value="1"/>
</dbReference>
<dbReference type="SMART" id="SM00702">
    <property type="entry name" value="P4Hc"/>
    <property type="match status" value="1"/>
</dbReference>
<dbReference type="SUPFAM" id="SSF51197">
    <property type="entry name" value="Clavaminate synthase-like"/>
    <property type="match status" value="1"/>
</dbReference>
<dbReference type="PROSITE" id="PS51471">
    <property type="entry name" value="FE2OG_OXY"/>
    <property type="match status" value="1"/>
</dbReference>
<comment type="cofactor">
    <cofactor evidence="1">
        <name>Fe(2+)</name>
        <dbReference type="ChEBI" id="CHEBI:29033"/>
    </cofactor>
    <text evidence="1">Binds 1 Fe(2+) ion per subunit.</text>
</comment>
<comment type="cofactor">
    <cofactor evidence="1">
        <name>L-ascorbate</name>
        <dbReference type="ChEBI" id="CHEBI:38290"/>
    </cofactor>
</comment>
<evidence type="ECO:0000255" key="1">
    <source>
        <dbReference type="HAMAP-Rule" id="MF_00657"/>
    </source>
</evidence>
<sequence>MLLHIPGLFDADELARIREALEQADWADGKATAGYQSAKAKHNLQLPEGHALAKEIGSALIDRLWKNPRFMSAALPHKVFPPLINCYREGGNFGFHIDNALRQPKGSPERVRTDLSSTLFLSDPDSYDGGELVIQDTYGEQQVKLAAGDLVLYPGTSLHKVNPVTRGVRYAAFFWTQSLVREDSQRALLFEMDNAIQQLTADVPEHPSLLQLTGTYHNLLRRWAEV</sequence>
<name>Y4316_PSEPW</name>
<gene>
    <name type="ordered locus">PputW619_4316</name>
</gene>
<proteinExistence type="inferred from homology"/>
<reference key="1">
    <citation type="submission" date="2008-02" db="EMBL/GenBank/DDBJ databases">
        <title>Complete sequence of Pseudomonas putida W619.</title>
        <authorList>
            <person name="Copeland A."/>
            <person name="Lucas S."/>
            <person name="Lapidus A."/>
            <person name="Barry K."/>
            <person name="Detter J.C."/>
            <person name="Glavina del Rio T."/>
            <person name="Dalin E."/>
            <person name="Tice H."/>
            <person name="Pitluck S."/>
            <person name="Chain P."/>
            <person name="Malfatti S."/>
            <person name="Shin M."/>
            <person name="Vergez L."/>
            <person name="Schmutz J."/>
            <person name="Larimer F."/>
            <person name="Land M."/>
            <person name="Hauser L."/>
            <person name="Kyrpides N."/>
            <person name="Kim E."/>
            <person name="Taghavi S."/>
            <person name="Vangronsveld D."/>
            <person name="van der Lelie D."/>
            <person name="Richardson P."/>
        </authorList>
    </citation>
    <scope>NUCLEOTIDE SEQUENCE [LARGE SCALE GENOMIC DNA]</scope>
    <source>
        <strain>W619</strain>
    </source>
</reference>
<protein>
    <recommendedName>
        <fullName evidence="1">PKHD-type hydroxylase PputW619_4316</fullName>
        <ecNumber evidence="1">1.14.11.-</ecNumber>
    </recommendedName>
</protein>
<organism>
    <name type="scientific">Pseudomonas putida (strain W619)</name>
    <dbReference type="NCBI Taxonomy" id="390235"/>
    <lineage>
        <taxon>Bacteria</taxon>
        <taxon>Pseudomonadati</taxon>
        <taxon>Pseudomonadota</taxon>
        <taxon>Gammaproteobacteria</taxon>
        <taxon>Pseudomonadales</taxon>
        <taxon>Pseudomonadaceae</taxon>
        <taxon>Pseudomonas</taxon>
    </lineage>
</organism>